<reference key="1">
    <citation type="journal article" date="2002" name="Proc. Natl. Acad. Sci. U.S.A.">
        <title>Genome sequence of a serotype M3 strain of group A Streptococcus: phage-encoded toxins, the high-virulence phenotype, and clone emergence.</title>
        <authorList>
            <person name="Beres S.B."/>
            <person name="Sylva G.L."/>
            <person name="Barbian K.D."/>
            <person name="Lei B."/>
            <person name="Hoff J.S."/>
            <person name="Mammarella N.D."/>
            <person name="Liu M.-Y."/>
            <person name="Smoot J.C."/>
            <person name="Porcella S.F."/>
            <person name="Parkins L.D."/>
            <person name="Campbell D.S."/>
            <person name="Smith T.M."/>
            <person name="McCormick J.K."/>
            <person name="Leung D.Y.M."/>
            <person name="Schlievert P.M."/>
            <person name="Musser J.M."/>
        </authorList>
    </citation>
    <scope>NUCLEOTIDE SEQUENCE [LARGE SCALE GENOMIC DNA]</scope>
    <source>
        <strain>ATCC BAA-595 / MGAS315</strain>
    </source>
</reference>
<comment type="function">
    <text evidence="1">Catalyzes the ATP- as well as the pyrophosphate-dependent phosphorylation of a specific serine residue in HPr, a phosphocarrier protein of the phosphoenolpyruvate-dependent sugar phosphotransferase system (PTS). HprK/P also catalyzes the pyrophosphate-producing, inorganic phosphate-dependent dephosphorylation (phosphorolysis) of seryl-phosphorylated HPr (P-Ser-HPr). The two antagonistic activities of HprK/P are regulated by several intracellular metabolites, which change their concentration in response to the absence or presence of rapidly metabolisable carbon sources (glucose, fructose, etc.) in the growth medium. Therefore, by controlling the phosphorylation state of HPr, HPrK/P is a sensor enzyme that plays a major role in the regulation of carbon metabolism and sugar transport: it mediates carbon catabolite repression (CCR), and regulates PTS-catalyzed carbohydrate uptake and inducer exclusion (By similarity).</text>
</comment>
<comment type="catalytic activity">
    <reaction>
        <text>[HPr protein]-L-serine + ATP = [HPr protein]-O-phospho-L-serine + ADP + H(+)</text>
        <dbReference type="Rhea" id="RHEA:46600"/>
        <dbReference type="Rhea" id="RHEA-COMP:11602"/>
        <dbReference type="Rhea" id="RHEA-COMP:11603"/>
        <dbReference type="ChEBI" id="CHEBI:15378"/>
        <dbReference type="ChEBI" id="CHEBI:29999"/>
        <dbReference type="ChEBI" id="CHEBI:30616"/>
        <dbReference type="ChEBI" id="CHEBI:83421"/>
        <dbReference type="ChEBI" id="CHEBI:456216"/>
    </reaction>
</comment>
<comment type="catalytic activity">
    <reaction>
        <text>[HPr protein]-O-phospho-L-serine + phosphate + H(+) = [HPr protein]-L-serine + diphosphate</text>
        <dbReference type="Rhea" id="RHEA:46604"/>
        <dbReference type="Rhea" id="RHEA-COMP:11602"/>
        <dbReference type="Rhea" id="RHEA-COMP:11603"/>
        <dbReference type="ChEBI" id="CHEBI:15378"/>
        <dbReference type="ChEBI" id="CHEBI:29999"/>
        <dbReference type="ChEBI" id="CHEBI:33019"/>
        <dbReference type="ChEBI" id="CHEBI:43474"/>
        <dbReference type="ChEBI" id="CHEBI:83421"/>
    </reaction>
</comment>
<comment type="cofactor">
    <cofactor evidence="1">
        <name>Mg(2+)</name>
        <dbReference type="ChEBI" id="CHEBI:18420"/>
    </cofactor>
</comment>
<comment type="subunit">
    <text evidence="1">Homohexamer.</text>
</comment>
<comment type="domain">
    <text evidence="1">The Walker A ATP-binding motif also binds Pi and PPi.</text>
</comment>
<comment type="miscellaneous">
    <text evidence="1">Both phosphorylation and phosphorolysis are carried out by the same active site and suggest a common mechanism for both reactions.</text>
</comment>
<comment type="similarity">
    <text evidence="3">Belongs to the HPrK/P family.</text>
</comment>
<dbReference type="EC" id="2.7.11.-"/>
<dbReference type="EC" id="2.7.4.-"/>
<dbReference type="EMBL" id="AE014074">
    <property type="protein sequence ID" value="AAM79019.1"/>
    <property type="molecule type" value="Genomic_DNA"/>
</dbReference>
<dbReference type="RefSeq" id="WP_032461359.1">
    <property type="nucleotide sequence ID" value="NC_004070.1"/>
</dbReference>
<dbReference type="SMR" id="P0DD52"/>
<dbReference type="KEGG" id="spg:SpyM3_0412"/>
<dbReference type="HOGENOM" id="CLU_052030_0_1_9"/>
<dbReference type="Proteomes" id="UP000000564">
    <property type="component" value="Chromosome"/>
</dbReference>
<dbReference type="GO" id="GO:0005524">
    <property type="term" value="F:ATP binding"/>
    <property type="evidence" value="ECO:0007669"/>
    <property type="project" value="UniProtKB-UniRule"/>
</dbReference>
<dbReference type="GO" id="GO:0000287">
    <property type="term" value="F:magnesium ion binding"/>
    <property type="evidence" value="ECO:0007669"/>
    <property type="project" value="UniProtKB-UniRule"/>
</dbReference>
<dbReference type="GO" id="GO:0000155">
    <property type="term" value="F:phosphorelay sensor kinase activity"/>
    <property type="evidence" value="ECO:0007669"/>
    <property type="project" value="InterPro"/>
</dbReference>
<dbReference type="GO" id="GO:0004674">
    <property type="term" value="F:protein serine/threonine kinase activity"/>
    <property type="evidence" value="ECO:0007669"/>
    <property type="project" value="UniProtKB-KW"/>
</dbReference>
<dbReference type="GO" id="GO:0004712">
    <property type="term" value="F:protein serine/threonine/tyrosine kinase activity"/>
    <property type="evidence" value="ECO:0007669"/>
    <property type="project" value="UniProtKB-UniRule"/>
</dbReference>
<dbReference type="GO" id="GO:0006109">
    <property type="term" value="P:regulation of carbohydrate metabolic process"/>
    <property type="evidence" value="ECO:0007669"/>
    <property type="project" value="UniProtKB-UniRule"/>
</dbReference>
<dbReference type="CDD" id="cd01918">
    <property type="entry name" value="HprK_C"/>
    <property type="match status" value="1"/>
</dbReference>
<dbReference type="FunFam" id="3.40.50.300:FF:000174">
    <property type="entry name" value="HPr kinase/phosphorylase"/>
    <property type="match status" value="1"/>
</dbReference>
<dbReference type="Gene3D" id="3.40.1390.20">
    <property type="entry name" value="HprK N-terminal domain-like"/>
    <property type="match status" value="1"/>
</dbReference>
<dbReference type="Gene3D" id="3.40.50.300">
    <property type="entry name" value="P-loop containing nucleotide triphosphate hydrolases"/>
    <property type="match status" value="1"/>
</dbReference>
<dbReference type="HAMAP" id="MF_01249">
    <property type="entry name" value="HPr_kinase"/>
    <property type="match status" value="1"/>
</dbReference>
<dbReference type="InterPro" id="IPR003755">
    <property type="entry name" value="HPr(Ser)_kin/Pase"/>
</dbReference>
<dbReference type="InterPro" id="IPR011104">
    <property type="entry name" value="Hpr_kin/Pase_C"/>
</dbReference>
<dbReference type="InterPro" id="IPR011126">
    <property type="entry name" value="Hpr_kin/Pase_Hpr_N"/>
</dbReference>
<dbReference type="InterPro" id="IPR027417">
    <property type="entry name" value="P-loop_NTPase"/>
</dbReference>
<dbReference type="InterPro" id="IPR028979">
    <property type="entry name" value="Ser_kin/Pase_Hpr-like_N_sf"/>
</dbReference>
<dbReference type="NCBIfam" id="TIGR00679">
    <property type="entry name" value="hpr-ser"/>
    <property type="match status" value="1"/>
</dbReference>
<dbReference type="PANTHER" id="PTHR30305:SF1">
    <property type="entry name" value="HPR KINASE_PHOSPHORYLASE"/>
    <property type="match status" value="1"/>
</dbReference>
<dbReference type="PANTHER" id="PTHR30305">
    <property type="entry name" value="PROTEIN YJDM-RELATED"/>
    <property type="match status" value="1"/>
</dbReference>
<dbReference type="Pfam" id="PF07475">
    <property type="entry name" value="Hpr_kinase_C"/>
    <property type="match status" value="1"/>
</dbReference>
<dbReference type="Pfam" id="PF02603">
    <property type="entry name" value="Hpr_kinase_N"/>
    <property type="match status" value="1"/>
</dbReference>
<dbReference type="SUPFAM" id="SSF75138">
    <property type="entry name" value="HprK N-terminal domain-like"/>
    <property type="match status" value="1"/>
</dbReference>
<dbReference type="SUPFAM" id="SSF53795">
    <property type="entry name" value="PEP carboxykinase-like"/>
    <property type="match status" value="1"/>
</dbReference>
<name>HPRK_STRP3</name>
<proteinExistence type="inferred from homology"/>
<protein>
    <recommendedName>
        <fullName>HPr kinase/phosphorylase</fullName>
        <shortName>HPrK/P</shortName>
        <ecNumber>2.7.11.-</ecNumber>
        <ecNumber>2.7.4.-</ecNumber>
    </recommendedName>
    <alternativeName>
        <fullName>HPr(Ser) kinase/phosphorylase</fullName>
    </alternativeName>
</protein>
<keyword id="KW-0067">ATP-binding</keyword>
<keyword id="KW-0119">Carbohydrate metabolism</keyword>
<keyword id="KW-0418">Kinase</keyword>
<keyword id="KW-0460">Magnesium</keyword>
<keyword id="KW-0479">Metal-binding</keyword>
<keyword id="KW-0511">Multifunctional enzyme</keyword>
<keyword id="KW-0547">Nucleotide-binding</keyword>
<keyword id="KW-0723">Serine/threonine-protein kinase</keyword>
<keyword id="KW-0808">Transferase</keyword>
<evidence type="ECO:0000250" key="1"/>
<evidence type="ECO:0000255" key="2"/>
<evidence type="ECO:0000305" key="3"/>
<feature type="chain" id="PRO_0000058999" description="HPr kinase/phosphorylase">
    <location>
        <begin position="1"/>
        <end position="310"/>
    </location>
</feature>
<feature type="region of interest" description="Important for the catalytic mechanism of both phosphorylation and dephosphorylation" evidence="1">
    <location>
        <begin position="201"/>
        <end position="210"/>
    </location>
</feature>
<feature type="region of interest" description="Important for the catalytic mechanism of dephosphorylation" evidence="1">
    <location>
        <begin position="264"/>
        <end position="269"/>
    </location>
</feature>
<feature type="active site" evidence="1">
    <location>
        <position position="138"/>
    </location>
</feature>
<feature type="active site" evidence="1">
    <location>
        <position position="159"/>
    </location>
</feature>
<feature type="active site" description="Proton acceptor; for phosphorylation activity. Proton donor; for dephosphorylation activity" evidence="1">
    <location>
        <position position="177"/>
    </location>
</feature>
<feature type="active site" evidence="1">
    <location>
        <position position="243"/>
    </location>
</feature>
<feature type="binding site" evidence="1">
    <location>
        <begin position="153"/>
        <end position="160"/>
    </location>
    <ligand>
        <name>ATP</name>
        <dbReference type="ChEBI" id="CHEBI:30616"/>
    </ligand>
</feature>
<feature type="binding site" evidence="2">
    <location>
        <position position="160"/>
    </location>
    <ligand>
        <name>Mg(2+)</name>
        <dbReference type="ChEBI" id="CHEBI:18420"/>
    </ligand>
</feature>
<feature type="binding site" evidence="2">
    <location>
        <position position="202"/>
    </location>
    <ligand>
        <name>Mg(2+)</name>
        <dbReference type="ChEBI" id="CHEBI:18420"/>
    </ligand>
</feature>
<sequence>MPVTVKMLVQKVKLDVVYATDNLLSKEITTSDISRPGLEMTGYFDYYAPERLQLFGMKEWSYLTQMTSHNRYSVLKEMFKKDTPAVVVSRNLAIPKEMVQAAKEEGISLLSSRVSTSRLAGEMSYFLDASLAERTSVHGVLMDIYGMGVLIQGDSGIGKSETGLELVKRGHRLVADDRVDVYAKDEETLWGEPAEILRHLLEIRGVGIIDVMSLYGASAVKDSSQVQLAIYLENFEAGKVFDRLGNGNEEITFSGVRIPRIRIPVKTGRNVSVVIEAAAMNHRAKEMGFDATKTFEDRLTQLITKNEVSQ</sequence>
<organism>
    <name type="scientific">Streptococcus pyogenes serotype M3 (strain ATCC BAA-595 / MGAS315)</name>
    <dbReference type="NCBI Taxonomy" id="198466"/>
    <lineage>
        <taxon>Bacteria</taxon>
        <taxon>Bacillati</taxon>
        <taxon>Bacillota</taxon>
        <taxon>Bacilli</taxon>
        <taxon>Lactobacillales</taxon>
        <taxon>Streptococcaceae</taxon>
        <taxon>Streptococcus</taxon>
    </lineage>
</organism>
<accession>P0DD52</accession>
<accession>Q8K885</accession>
<gene>
    <name type="primary">hprK</name>
    <name type="synonym">ptsK</name>
    <name type="ordered locus">SpyM3_0412</name>
</gene>